<name>RF2_CAMJR</name>
<organism>
    <name type="scientific">Campylobacter jejuni (strain RM1221)</name>
    <dbReference type="NCBI Taxonomy" id="195099"/>
    <lineage>
        <taxon>Bacteria</taxon>
        <taxon>Pseudomonadati</taxon>
        <taxon>Campylobacterota</taxon>
        <taxon>Epsilonproteobacteria</taxon>
        <taxon>Campylobacterales</taxon>
        <taxon>Campylobacteraceae</taxon>
        <taxon>Campylobacter</taxon>
    </lineage>
</organism>
<gene>
    <name evidence="1" type="primary">prfB</name>
    <name type="ordered locus">CJE1628</name>
</gene>
<evidence type="ECO:0000255" key="1">
    <source>
        <dbReference type="HAMAP-Rule" id="MF_00094"/>
    </source>
</evidence>
<sequence>MDNYEFSELLKTLKNKVGNIASIIKPENIQTRLKEIEELENSPSFWSDVKQAGVIGKEKTKITNLLKNYENAFNALNDASELFDLANSENDTETLEALFNDAPKLEDTITSLEISMLLSGENDGKNAIVSIHPGAGGTESNDWASILYRMYLRFCEREGFKVETLDFQEGEEAGLKDVSFLVKGENAYGYLKAENGIHRLVRTSPFDSAGRRHTSFSSVMVSPELDDDIEIEIEEKDIRIDYYRASGAGGQHVNKTESAVRITHFPTGIVVQCQNDRSQHKNKATAFKMLKSRLYELELMKQQDSANTGEKSEIGWGHQIRSYVLFPYQQVKDNRSGEAFSQVDNILDGDIKKMIEGVLISLKAE</sequence>
<keyword id="KW-0963">Cytoplasm</keyword>
<keyword id="KW-0488">Methylation</keyword>
<keyword id="KW-0648">Protein biosynthesis</keyword>
<proteinExistence type="inferred from homology"/>
<protein>
    <recommendedName>
        <fullName evidence="1">Peptide chain release factor 2</fullName>
        <shortName evidence="1">RF-2</shortName>
    </recommendedName>
</protein>
<comment type="function">
    <text evidence="1">Peptide chain release factor 2 directs the termination of translation in response to the peptide chain termination codons UGA and UAA.</text>
</comment>
<comment type="subcellular location">
    <subcellularLocation>
        <location evidence="1">Cytoplasm</location>
    </subcellularLocation>
</comment>
<comment type="PTM">
    <text evidence="1">Methylated by PrmC. Methylation increases the termination efficiency of RF2.</text>
</comment>
<comment type="similarity">
    <text evidence="1">Belongs to the prokaryotic/mitochondrial release factor family.</text>
</comment>
<feature type="chain" id="PRO_0000166809" description="Peptide chain release factor 2">
    <location>
        <begin position="1"/>
        <end position="365"/>
    </location>
</feature>
<feature type="modified residue" description="N5-methylglutamine" evidence="1">
    <location>
        <position position="251"/>
    </location>
</feature>
<reference key="1">
    <citation type="journal article" date="2005" name="PLoS Biol.">
        <title>Major structural differences and novel potential virulence mechanisms from the genomes of multiple Campylobacter species.</title>
        <authorList>
            <person name="Fouts D.E."/>
            <person name="Mongodin E.F."/>
            <person name="Mandrell R.E."/>
            <person name="Miller W.G."/>
            <person name="Rasko D.A."/>
            <person name="Ravel J."/>
            <person name="Brinkac L.M."/>
            <person name="DeBoy R.T."/>
            <person name="Parker C.T."/>
            <person name="Daugherty S.C."/>
            <person name="Dodson R.J."/>
            <person name="Durkin A.S."/>
            <person name="Madupu R."/>
            <person name="Sullivan S.A."/>
            <person name="Shetty J.U."/>
            <person name="Ayodeji M.A."/>
            <person name="Shvartsbeyn A."/>
            <person name="Schatz M.C."/>
            <person name="Badger J.H."/>
            <person name="Fraser C.M."/>
            <person name="Nelson K.E."/>
        </authorList>
    </citation>
    <scope>NUCLEOTIDE SEQUENCE [LARGE SCALE GENOMIC DNA]</scope>
    <source>
        <strain>RM1221</strain>
    </source>
</reference>
<dbReference type="EMBL" id="CP000025">
    <property type="protein sequence ID" value="AAW36061.1"/>
    <property type="molecule type" value="Genomic_DNA"/>
</dbReference>
<dbReference type="RefSeq" id="WP_011049983.1">
    <property type="nucleotide sequence ID" value="NC_003912.7"/>
</dbReference>
<dbReference type="SMR" id="Q5HSX6"/>
<dbReference type="KEGG" id="cjr:CJE1628"/>
<dbReference type="HOGENOM" id="CLU_036856_6_0_7"/>
<dbReference type="GO" id="GO:0005737">
    <property type="term" value="C:cytoplasm"/>
    <property type="evidence" value="ECO:0007669"/>
    <property type="project" value="UniProtKB-SubCell"/>
</dbReference>
<dbReference type="GO" id="GO:0016149">
    <property type="term" value="F:translation release factor activity, codon specific"/>
    <property type="evidence" value="ECO:0007669"/>
    <property type="project" value="UniProtKB-UniRule"/>
</dbReference>
<dbReference type="FunFam" id="3.30.160.20:FF:000010">
    <property type="entry name" value="Peptide chain release factor 2"/>
    <property type="match status" value="1"/>
</dbReference>
<dbReference type="Gene3D" id="3.30.160.20">
    <property type="match status" value="1"/>
</dbReference>
<dbReference type="Gene3D" id="3.30.70.1660">
    <property type="match status" value="1"/>
</dbReference>
<dbReference type="Gene3D" id="1.20.58.410">
    <property type="entry name" value="Release factor"/>
    <property type="match status" value="1"/>
</dbReference>
<dbReference type="HAMAP" id="MF_00094">
    <property type="entry name" value="Rel_fac_2"/>
    <property type="match status" value="1"/>
</dbReference>
<dbReference type="InterPro" id="IPR005139">
    <property type="entry name" value="PCRF"/>
</dbReference>
<dbReference type="InterPro" id="IPR000352">
    <property type="entry name" value="Pep_chain_release_fac_I"/>
</dbReference>
<dbReference type="InterPro" id="IPR045853">
    <property type="entry name" value="Pep_chain_release_fac_I_sf"/>
</dbReference>
<dbReference type="InterPro" id="IPR004374">
    <property type="entry name" value="PrfB"/>
</dbReference>
<dbReference type="NCBIfam" id="TIGR00020">
    <property type="entry name" value="prfB"/>
    <property type="match status" value="1"/>
</dbReference>
<dbReference type="PANTHER" id="PTHR43116:SF3">
    <property type="entry name" value="CLASS I PEPTIDE CHAIN RELEASE FACTOR"/>
    <property type="match status" value="1"/>
</dbReference>
<dbReference type="PANTHER" id="PTHR43116">
    <property type="entry name" value="PEPTIDE CHAIN RELEASE FACTOR 2"/>
    <property type="match status" value="1"/>
</dbReference>
<dbReference type="Pfam" id="PF03462">
    <property type="entry name" value="PCRF"/>
    <property type="match status" value="1"/>
</dbReference>
<dbReference type="Pfam" id="PF00472">
    <property type="entry name" value="RF-1"/>
    <property type="match status" value="1"/>
</dbReference>
<dbReference type="SMART" id="SM00937">
    <property type="entry name" value="PCRF"/>
    <property type="match status" value="1"/>
</dbReference>
<dbReference type="SUPFAM" id="SSF75620">
    <property type="entry name" value="Release factor"/>
    <property type="match status" value="1"/>
</dbReference>
<dbReference type="PROSITE" id="PS00745">
    <property type="entry name" value="RF_PROK_I"/>
    <property type="match status" value="1"/>
</dbReference>
<accession>Q5HSX6</accession>